<keyword id="KW-0002">3D-structure</keyword>
<keyword id="KW-0007">Acetylation</keyword>
<keyword id="KW-1017">Isopeptide bond</keyword>
<keyword id="KW-0597">Phosphoprotein</keyword>
<keyword id="KW-1185">Reference proteome</keyword>
<keyword id="KW-0833">Ubl conjugation pathway</keyword>
<sequence>MSDSEVNQEAKPEVKPEVKPETHINLKVSDGSSEIFFKIKKTTPLRRLMEAFAKRQGKEMDSLRFLYDGIRIQADQTPEDLDMEDNDIIEAHREQIGGATY</sequence>
<gene>
    <name type="primary">SMT3</name>
    <name type="ordered locus">YDR510W</name>
    <name type="ORF">D9719.15</name>
</gene>
<comment type="function">
    <text>Not known; suppressor of MIF2 mutations.</text>
</comment>
<comment type="subunit">
    <text evidence="2">Activated by a E1 ligase composed of AOS1 and UBA2.</text>
</comment>
<comment type="interaction">
    <interactant intactId="EBI-17490">
        <id>Q12306</id>
    </interactant>
    <interactant intactId="EBI-4187">
        <id>P32797</id>
        <label>CDC13</label>
    </interactant>
    <organismsDiffer>false</organismsDiffer>
    <experiments>3</experiments>
</comment>
<comment type="interaction">
    <interactant intactId="EBI-17490">
        <id>Q12306</id>
    </interactant>
    <interactant intactId="EBI-4308">
        <id>P25694</id>
        <label>CDC48</label>
    </interactant>
    <organismsDiffer>false</organismsDiffer>
    <experiments>3</experiments>
</comment>
<comment type="interaction">
    <interactant intactId="EBI-17490">
        <id>Q12306</id>
    </interactant>
    <interactant intactId="EBI-32195">
        <id>Q12050</id>
        <label>ELG1</label>
    </interactant>
    <organismsDiffer>false</organismsDiffer>
    <experiments>11</experiments>
</comment>
<comment type="interaction">
    <interactant intactId="EBI-17490">
        <id>Q12306</id>
    </interactant>
    <interactant intactId="EBI-10533">
        <id>P29469</id>
        <label>MCM2</label>
    </interactant>
    <organismsDiffer>false</organismsDiffer>
    <experiments>2</experiments>
</comment>
<comment type="interaction">
    <interactant intactId="EBI-17490">
        <id>Q12306</id>
    </interactant>
    <interactant intactId="EBI-10541">
        <id>P24279</id>
        <label>MCM3</label>
    </interactant>
    <organismsDiffer>false</organismsDiffer>
    <experiments>2</experiments>
</comment>
<comment type="interaction">
    <interactant intactId="EBI-17490">
        <id>Q12306</id>
    </interactant>
    <interactant intactId="EBI-4326">
        <id>P30665</id>
        <label>MCM4</label>
    </interactant>
    <organismsDiffer>false</organismsDiffer>
    <experiments>2</experiments>
</comment>
<comment type="interaction">
    <interactant intactId="EBI-17490">
        <id>Q12306</id>
    </interactant>
    <interactant intactId="EBI-10549">
        <id>P29496</id>
        <label>MCM5</label>
    </interactant>
    <organismsDiffer>false</organismsDiffer>
    <experiments>3</experiments>
</comment>
<comment type="interaction">
    <interactant intactId="EBI-17490">
        <id>Q12306</id>
    </interactant>
    <interactant intactId="EBI-10556">
        <id>P53091</id>
        <label>MCM6</label>
    </interactant>
    <organismsDiffer>false</organismsDiffer>
    <experiments>2</experiments>
</comment>
<comment type="interaction">
    <interactant intactId="EBI-17490">
        <id>Q12306</id>
    </interactant>
    <interactant intactId="EBI-4300">
        <id>P38132</id>
        <label>MCM7</label>
    </interactant>
    <organismsDiffer>false</organismsDiffer>
    <experiments>2</experiments>
</comment>
<comment type="interaction">
    <interactant intactId="EBI-17490">
        <id>Q12306</id>
    </interactant>
    <interactant intactId="EBI-14410">
        <id>P43124</id>
        <label>NSE4</label>
    </interactant>
    <organismsDiffer>false</organismsDiffer>
    <experiments>2</experiments>
</comment>
<comment type="interaction">
    <interactant intactId="EBI-17490">
        <id>Q12306</id>
    </interactant>
    <interactant intactId="EBI-13404">
        <id>P07271</id>
        <label>PIF1</label>
    </interactant>
    <organismsDiffer>false</organismsDiffer>
    <experiments>2</experiments>
</comment>
<comment type="interaction">
    <interactant intactId="EBI-17490">
        <id>Q12306</id>
    </interactant>
    <interactant intactId="EBI-12993">
        <id>P15873</id>
        <label>POL30</label>
    </interactant>
    <organismsDiffer>false</organismsDiffer>
    <experiments>6</experiments>
</comment>
<comment type="interaction">
    <interactant intactId="EBI-17490">
        <id>Q12306</id>
    </interactant>
    <interactant intactId="EBI-14719">
        <id>P06778</id>
        <label>RAD52</label>
    </interactant>
    <organismsDiffer>false</organismsDiffer>
    <experiments>2</experiments>
</comment>
<comment type="interaction">
    <interactant intactId="EBI-17490">
        <id>Q12306</id>
    </interactant>
    <interactant intactId="EBI-14909">
        <id>P14291</id>
        <label>RED1</label>
    </interactant>
    <organismsDiffer>false</organismsDiffer>
    <experiments>9</experiments>
</comment>
<comment type="interaction">
    <interactant intactId="EBI-17490">
        <id>Q12306</id>
    </interactant>
    <interactant intactId="EBI-17059">
        <id>P35187</id>
        <label>SGS1</label>
    </interactant>
    <organismsDiffer>false</organismsDiffer>
    <experiments>3</experiments>
</comment>
<comment type="interaction">
    <interactant intactId="EBI-17490">
        <id>Q12306</id>
    </interactant>
    <interactant intactId="EBI-17402">
        <id>P32908</id>
        <label>SMC1</label>
    </interactant>
    <organismsDiffer>false</organismsDiffer>
    <experiments>2</experiments>
</comment>
<comment type="interaction">
    <interactant intactId="EBI-17490">
        <id>Q12306</id>
    </interactant>
    <interactant intactId="EBI-34125">
        <id>Q08204</id>
        <label>SMC5</label>
    </interactant>
    <organismsDiffer>false</organismsDiffer>
    <experiments>5</experiments>
</comment>
<comment type="interaction">
    <interactant intactId="EBI-17490">
        <id>Q12306</id>
    </interactant>
    <interactant intactId="EBI-17490">
        <id>Q12306</id>
        <label>SMT3</label>
    </interactant>
    <organismsDiffer>false</organismsDiffer>
    <experiments>3</experiments>
</comment>
<comment type="interaction">
    <interactant intactId="EBI-17490">
        <id>Q12306</id>
    </interactant>
    <interactant intactId="EBI-18110">
        <id>P12954</id>
        <label>SRS2</label>
    </interactant>
    <organismsDiffer>false</organismsDiffer>
    <experiments>4</experiments>
</comment>
<comment type="interaction">
    <interactant intactId="EBI-17490">
        <id>Q12306</id>
    </interactant>
    <interactant intactId="EBI-19710">
        <id>P52488</id>
        <label>UBA2</label>
    </interactant>
    <organismsDiffer>false</organismsDiffer>
    <experiments>2</experiments>
</comment>
<comment type="interaction">
    <interactant intactId="EBI-17490">
        <id>Q12306</id>
    </interactant>
    <interactant intactId="EBI-19760">
        <id>P50623</id>
        <label>UBC9</label>
    </interactant>
    <organismsDiffer>false</organismsDiffer>
    <experiments>4</experiments>
</comment>
<comment type="interaction">
    <interactant intactId="EBI-17490">
        <id>Q12306</id>
    </interactant>
    <interactant intactId="EBI-19997">
        <id>P53044</id>
        <label>UFD1</label>
    </interactant>
    <organismsDiffer>false</organismsDiffer>
    <experiments>3</experiments>
</comment>
<comment type="interaction">
    <interactant intactId="EBI-17490">
        <id>Q12306</id>
    </interactant>
    <interactant intactId="EBI-8214">
        <id>P32807</id>
        <label>YKU70</label>
    </interactant>
    <organismsDiffer>false</organismsDiffer>
    <experiments>2</experiments>
</comment>
<comment type="interaction">
    <interactant intactId="EBI-17490">
        <id>Q12306</id>
    </interactant>
    <interactant intactId="EBI-8224">
        <id>Q04437</id>
        <label>YKU80</label>
    </interactant>
    <organismsDiffer>false</organismsDiffer>
    <experiments>2</experiments>
</comment>
<comment type="miscellaneous">
    <text evidence="3">Present with 2940 molecules/cell in log phase SD medium.</text>
</comment>
<comment type="similarity">
    <text evidence="4">Belongs to the ubiquitin family. SUMO subfamily.</text>
</comment>
<reference key="1">
    <citation type="submission" date="1995-07" db="EMBL/GenBank/DDBJ databases">
        <authorList>
            <person name="Meluh P.B."/>
            <person name="Koshland D.E."/>
        </authorList>
    </citation>
    <scope>NUCLEOTIDE SEQUENCE [GENOMIC DNA]</scope>
    <source>
        <strain>YPH1/YNN214</strain>
    </source>
</reference>
<reference key="2">
    <citation type="journal article" date="1997" name="Nature">
        <title>The nucleotide sequence of Saccharomyces cerevisiae chromosome IV.</title>
        <authorList>
            <person name="Jacq C."/>
            <person name="Alt-Moerbe J."/>
            <person name="Andre B."/>
            <person name="Arnold W."/>
            <person name="Bahr A."/>
            <person name="Ballesta J.P.G."/>
            <person name="Bargues M."/>
            <person name="Baron L."/>
            <person name="Becker A."/>
            <person name="Biteau N."/>
            <person name="Bloecker H."/>
            <person name="Blugeon C."/>
            <person name="Boskovic J."/>
            <person name="Brandt P."/>
            <person name="Brueckner M."/>
            <person name="Buitrago M.J."/>
            <person name="Coster F."/>
            <person name="Delaveau T."/>
            <person name="del Rey F."/>
            <person name="Dujon B."/>
            <person name="Eide L.G."/>
            <person name="Garcia-Cantalejo J.M."/>
            <person name="Goffeau A."/>
            <person name="Gomez-Peris A."/>
            <person name="Granotier C."/>
            <person name="Hanemann V."/>
            <person name="Hankeln T."/>
            <person name="Hoheisel J.D."/>
            <person name="Jaeger W."/>
            <person name="Jimenez A."/>
            <person name="Jonniaux J.-L."/>
            <person name="Kraemer C."/>
            <person name="Kuester H."/>
            <person name="Laamanen P."/>
            <person name="Legros Y."/>
            <person name="Louis E.J."/>
            <person name="Moeller-Rieker S."/>
            <person name="Monnet A."/>
            <person name="Moro M."/>
            <person name="Mueller-Auer S."/>
            <person name="Nussbaumer B."/>
            <person name="Paricio N."/>
            <person name="Paulin L."/>
            <person name="Perea J."/>
            <person name="Perez-Alonso M."/>
            <person name="Perez-Ortin J.E."/>
            <person name="Pohl T.M."/>
            <person name="Prydz H."/>
            <person name="Purnelle B."/>
            <person name="Rasmussen S.W."/>
            <person name="Remacha M.A."/>
            <person name="Revuelta J.L."/>
            <person name="Rieger M."/>
            <person name="Salom D."/>
            <person name="Saluz H.P."/>
            <person name="Saiz J.E."/>
            <person name="Saren A.-M."/>
            <person name="Schaefer M."/>
            <person name="Scharfe M."/>
            <person name="Schmidt E.R."/>
            <person name="Schneider C."/>
            <person name="Scholler P."/>
            <person name="Schwarz S."/>
            <person name="Soler-Mira A."/>
            <person name="Urrestarazu L.A."/>
            <person name="Verhasselt P."/>
            <person name="Vissers S."/>
            <person name="Voet M."/>
            <person name="Volckaert G."/>
            <person name="Wagner G."/>
            <person name="Wambutt R."/>
            <person name="Wedler E."/>
            <person name="Wedler H."/>
            <person name="Woelfl S."/>
            <person name="Harris D.E."/>
            <person name="Bowman S."/>
            <person name="Brown D."/>
            <person name="Churcher C.M."/>
            <person name="Connor R."/>
            <person name="Dedman K."/>
            <person name="Gentles S."/>
            <person name="Hamlin N."/>
            <person name="Hunt S."/>
            <person name="Jones L."/>
            <person name="McDonald S."/>
            <person name="Murphy L.D."/>
            <person name="Niblett D."/>
            <person name="Odell C."/>
            <person name="Oliver K."/>
            <person name="Rajandream M.A."/>
            <person name="Richards C."/>
            <person name="Shore L."/>
            <person name="Walsh S.V."/>
            <person name="Barrell B.G."/>
            <person name="Dietrich F.S."/>
            <person name="Mulligan J.T."/>
            <person name="Allen E."/>
            <person name="Araujo R."/>
            <person name="Aviles E."/>
            <person name="Berno A."/>
            <person name="Carpenter J."/>
            <person name="Chen E."/>
            <person name="Cherry J.M."/>
            <person name="Chung E."/>
            <person name="Duncan M."/>
            <person name="Hunicke-Smith S."/>
            <person name="Hyman R.W."/>
            <person name="Komp C."/>
            <person name="Lashkari D."/>
            <person name="Lew H."/>
            <person name="Lin D."/>
            <person name="Mosedale D."/>
            <person name="Nakahara K."/>
            <person name="Namath A."/>
            <person name="Oefner P."/>
            <person name="Oh C."/>
            <person name="Petel F.X."/>
            <person name="Roberts D."/>
            <person name="Schramm S."/>
            <person name="Schroeder M."/>
            <person name="Shogren T."/>
            <person name="Shroff N."/>
            <person name="Winant A."/>
            <person name="Yelton M.A."/>
            <person name="Botstein D."/>
            <person name="Davis R.W."/>
            <person name="Johnston M."/>
            <person name="Andrews S."/>
            <person name="Brinkman R."/>
            <person name="Cooper J."/>
            <person name="Ding H."/>
            <person name="Du Z."/>
            <person name="Favello A."/>
            <person name="Fulton L."/>
            <person name="Gattung S."/>
            <person name="Greco T."/>
            <person name="Hallsworth K."/>
            <person name="Hawkins J."/>
            <person name="Hillier L.W."/>
            <person name="Jier M."/>
            <person name="Johnson D."/>
            <person name="Johnston L."/>
            <person name="Kirsten J."/>
            <person name="Kucaba T."/>
            <person name="Langston Y."/>
            <person name="Latreille P."/>
            <person name="Le T."/>
            <person name="Mardis E."/>
            <person name="Menezes S."/>
            <person name="Miller N."/>
            <person name="Nhan M."/>
            <person name="Pauley A."/>
            <person name="Peluso D."/>
            <person name="Rifkin L."/>
            <person name="Riles L."/>
            <person name="Taich A."/>
            <person name="Trevaskis E."/>
            <person name="Vignati D."/>
            <person name="Wilcox L."/>
            <person name="Wohldman P."/>
            <person name="Vaudin M."/>
            <person name="Wilson R."/>
            <person name="Waterston R."/>
            <person name="Albermann K."/>
            <person name="Hani J."/>
            <person name="Heumann K."/>
            <person name="Kleine K."/>
            <person name="Mewes H.-W."/>
            <person name="Zollner A."/>
            <person name="Zaccaria P."/>
        </authorList>
    </citation>
    <scope>NUCLEOTIDE SEQUENCE [LARGE SCALE GENOMIC DNA]</scope>
    <source>
        <strain>ATCC 204508 / S288c</strain>
    </source>
</reference>
<reference key="3">
    <citation type="journal article" date="2014" name="G3 (Bethesda)">
        <title>The reference genome sequence of Saccharomyces cerevisiae: Then and now.</title>
        <authorList>
            <person name="Engel S.R."/>
            <person name="Dietrich F.S."/>
            <person name="Fisk D.G."/>
            <person name="Binkley G."/>
            <person name="Balakrishnan R."/>
            <person name="Costanzo M.C."/>
            <person name="Dwight S.S."/>
            <person name="Hitz B.C."/>
            <person name="Karra K."/>
            <person name="Nash R.S."/>
            <person name="Weng S."/>
            <person name="Wong E.D."/>
            <person name="Lloyd P."/>
            <person name="Skrzypek M.S."/>
            <person name="Miyasato S.R."/>
            <person name="Simison M."/>
            <person name="Cherry J.M."/>
        </authorList>
    </citation>
    <scope>GENOME REANNOTATION</scope>
    <source>
        <strain>ATCC 204508 / S288c</strain>
    </source>
</reference>
<reference key="4">
    <citation type="journal article" date="2007" name="Genome Res.">
        <title>Approaching a complete repository of sequence-verified protein-encoding clones for Saccharomyces cerevisiae.</title>
        <authorList>
            <person name="Hu Y."/>
            <person name="Rolfs A."/>
            <person name="Bhullar B."/>
            <person name="Murthy T.V.S."/>
            <person name="Zhu C."/>
            <person name="Berger M.F."/>
            <person name="Camargo A.A."/>
            <person name="Kelley F."/>
            <person name="McCarron S."/>
            <person name="Jepson D."/>
            <person name="Richardson A."/>
            <person name="Raphael J."/>
            <person name="Moreira D."/>
            <person name="Taycher E."/>
            <person name="Zuo D."/>
            <person name="Mohr S."/>
            <person name="Kane M.F."/>
            <person name="Williamson J."/>
            <person name="Simpson A.J.G."/>
            <person name="Bulyk M.L."/>
            <person name="Harlow E."/>
            <person name="Marsischky G."/>
            <person name="Kolodner R.D."/>
            <person name="LaBaer J."/>
        </authorList>
    </citation>
    <scope>NUCLEOTIDE SEQUENCE [GENOMIC DNA]</scope>
    <source>
        <strain>ATCC 204508 / S288c</strain>
    </source>
</reference>
<reference key="5">
    <citation type="journal article" date="1997" name="EMBO J.">
        <title>The ubiquitin-like protein Smt3p is activated for conjugation to other proteins by an Aos1p/Uba2p heterodimer.</title>
        <authorList>
            <person name="Johnson E.S."/>
            <person name="Schwienhorst I."/>
            <person name="Dohmen R.J."/>
            <person name="Blobel G."/>
        </authorList>
    </citation>
    <scope>INTERACTION WITH AOS1 AND UBA2</scope>
</reference>
<reference key="6">
    <citation type="journal article" date="2003" name="Nature">
        <title>Global analysis of protein expression in yeast.</title>
        <authorList>
            <person name="Ghaemmaghami S."/>
            <person name="Huh W.-K."/>
            <person name="Bower K."/>
            <person name="Howson R.W."/>
            <person name="Belle A."/>
            <person name="Dephoure N."/>
            <person name="O'Shea E.K."/>
            <person name="Weissman J.S."/>
        </authorList>
    </citation>
    <scope>LEVEL OF PROTEIN EXPRESSION [LARGE SCALE ANALYSIS]</scope>
</reference>
<reference key="7">
    <citation type="journal article" date="2007" name="J. Proteome Res.">
        <title>Large-scale phosphorylation analysis of alpha-factor-arrested Saccharomyces cerevisiae.</title>
        <authorList>
            <person name="Li X."/>
            <person name="Gerber S.A."/>
            <person name="Rudner A.D."/>
            <person name="Beausoleil S.A."/>
            <person name="Haas W."/>
            <person name="Villen J."/>
            <person name="Elias J.E."/>
            <person name="Gygi S.P."/>
        </authorList>
    </citation>
    <scope>PHOSPHORYLATION [LARGE SCALE ANALYSIS] AT SER-2</scope>
    <scope>IDENTIFICATION BY MASS SPECTROMETRY [LARGE SCALE ANALYSIS]</scope>
    <source>
        <strain>ADR376</strain>
    </source>
</reference>
<reference key="8">
    <citation type="journal article" date="2007" name="Proc. Natl. Acad. Sci. U.S.A.">
        <title>Analysis of phosphorylation sites on proteins from Saccharomyces cerevisiae by electron transfer dissociation (ETD) mass spectrometry.</title>
        <authorList>
            <person name="Chi A."/>
            <person name="Huttenhower C."/>
            <person name="Geer L.Y."/>
            <person name="Coon J.J."/>
            <person name="Syka J.E.P."/>
            <person name="Bai D.L."/>
            <person name="Shabanowitz J."/>
            <person name="Burke D.J."/>
            <person name="Troyanskaya O.G."/>
            <person name="Hunt D.F."/>
        </authorList>
    </citation>
    <scope>ACETYLATION [LARGE SCALE ANALYSIS] AT SER-2</scope>
    <scope>PHOSPHORYLATION [LARGE SCALE ANALYSIS] AT SER-2 AND SER-4</scope>
    <scope>CLEAVAGE OF INITIATOR METHIONINE [LARGE SCALE ANALYSIS]</scope>
    <scope>IDENTIFICATION BY MASS SPECTROMETRY [LARGE SCALE ANALYSIS]</scope>
</reference>
<reference key="9">
    <citation type="journal article" date="2008" name="Mol. Cell. Proteomics">
        <title>A multidimensional chromatography technology for in-depth phosphoproteome analysis.</title>
        <authorList>
            <person name="Albuquerque C.P."/>
            <person name="Smolka M.B."/>
            <person name="Payne S.H."/>
            <person name="Bafna V."/>
            <person name="Eng J."/>
            <person name="Zhou H."/>
        </authorList>
    </citation>
    <scope>IDENTIFICATION BY MASS SPECTROMETRY [LARGE SCALE ANALYSIS]</scope>
</reference>
<reference key="10">
    <citation type="journal article" date="2002" name="Protein Sci.">
        <title>Solution structure of a yeast ubiquitin-like protein Smt3: the role of structurally less defined sequences in protein-protein recognitions.</title>
        <authorList>
            <person name="Sheng W."/>
            <person name="Liao X."/>
        </authorList>
    </citation>
    <scope>STRUCTURE BY NMR</scope>
</reference>
<reference key="11">
    <citation type="journal article" date="2000" name="Mol. Cell">
        <title>Ulp1-SUMO crystal structure and genetic analysis reveal conserved interactions and a regulatory element essential for cell growth in yeast.</title>
        <authorList>
            <person name="Mossessova E."/>
            <person name="Lima C.D."/>
        </authorList>
    </citation>
    <scope>X-RAY CRYSTALLOGRAPHY (1.6 ANGSTROMS) OF 13-98 IN COMPLEX WITH ULP1</scope>
</reference>
<feature type="initiator methionine" description="Removed" evidence="5">
    <location>
        <position position="1"/>
    </location>
</feature>
<feature type="chain" id="PRO_0000035963" description="Ubiquitin-like protein SMT3">
    <location>
        <begin position="2"/>
        <end position="98"/>
    </location>
</feature>
<feature type="propeptide" id="PRO_0000035964">
    <location>
        <begin position="99"/>
        <end position="101"/>
    </location>
</feature>
<feature type="domain" description="Ubiquitin-like" evidence="1">
    <location>
        <begin position="22"/>
        <end position="98"/>
    </location>
</feature>
<feature type="modified residue" description="N-acetylserine" evidence="5">
    <location>
        <position position="2"/>
    </location>
</feature>
<feature type="modified residue" description="Phosphoserine" evidence="5 6">
    <location>
        <position position="2"/>
    </location>
</feature>
<feature type="modified residue" description="Phosphoserine" evidence="5">
    <location>
        <position position="4"/>
    </location>
</feature>
<feature type="cross-link" description="Glycyl lysine isopeptide (Gly-Lys) (interchain with K-? in acceptor proteins)">
    <location>
        <position position="98"/>
    </location>
</feature>
<feature type="strand" evidence="7">
    <location>
        <begin position="22"/>
        <end position="29"/>
    </location>
</feature>
<feature type="strand" evidence="7">
    <location>
        <begin position="34"/>
        <end position="40"/>
    </location>
</feature>
<feature type="helix" evidence="7">
    <location>
        <begin position="46"/>
        <end position="56"/>
    </location>
</feature>
<feature type="helix" evidence="7">
    <location>
        <begin position="60"/>
        <end position="62"/>
    </location>
</feature>
<feature type="strand" evidence="7">
    <location>
        <begin position="64"/>
        <end position="67"/>
    </location>
</feature>
<feature type="strand" evidence="8">
    <location>
        <begin position="70"/>
        <end position="72"/>
    </location>
</feature>
<feature type="turn" evidence="7">
    <location>
        <begin position="78"/>
        <end position="82"/>
    </location>
</feature>
<feature type="strand" evidence="7">
    <location>
        <begin position="87"/>
        <end position="92"/>
    </location>
</feature>
<organism>
    <name type="scientific">Saccharomyces cerevisiae (strain ATCC 204508 / S288c)</name>
    <name type="common">Baker's yeast</name>
    <dbReference type="NCBI Taxonomy" id="559292"/>
    <lineage>
        <taxon>Eukaryota</taxon>
        <taxon>Fungi</taxon>
        <taxon>Dikarya</taxon>
        <taxon>Ascomycota</taxon>
        <taxon>Saccharomycotina</taxon>
        <taxon>Saccharomycetes</taxon>
        <taxon>Saccharomycetales</taxon>
        <taxon>Saccharomycetaceae</taxon>
        <taxon>Saccharomyces</taxon>
    </lineage>
</organism>
<accession>Q12306</accession>
<accession>D6VTD1</accession>
<dbReference type="EMBL" id="U27233">
    <property type="protein sequence ID" value="AAB01675.1"/>
    <property type="molecule type" value="Genomic_DNA"/>
</dbReference>
<dbReference type="EMBL" id="U33057">
    <property type="protein sequence ID" value="AAB64951.1"/>
    <property type="molecule type" value="Genomic_DNA"/>
</dbReference>
<dbReference type="EMBL" id="AY558174">
    <property type="protein sequence ID" value="AAS56500.1"/>
    <property type="molecule type" value="Genomic_DNA"/>
</dbReference>
<dbReference type="EMBL" id="BK006938">
    <property type="protein sequence ID" value="DAA12341.1"/>
    <property type="molecule type" value="Genomic_DNA"/>
</dbReference>
<dbReference type="PIR" id="S63999">
    <property type="entry name" value="S63999"/>
</dbReference>
<dbReference type="RefSeq" id="NP_010798.1">
    <property type="nucleotide sequence ID" value="NM_001180818.1"/>
</dbReference>
<dbReference type="PDB" id="1EUV">
    <property type="method" value="X-ray"/>
    <property type="resolution" value="1.60 A"/>
    <property type="chains" value="B=13-98"/>
</dbReference>
<dbReference type="PDB" id="1L2N">
    <property type="method" value="NMR"/>
    <property type="chains" value="A=1-101"/>
</dbReference>
<dbReference type="PDB" id="2EKE">
    <property type="method" value="X-ray"/>
    <property type="resolution" value="1.90 A"/>
    <property type="chains" value="C/D=13-98"/>
</dbReference>
<dbReference type="PDB" id="3PGE">
    <property type="method" value="X-ray"/>
    <property type="resolution" value="2.80 A"/>
    <property type="chains" value="A=1-98"/>
</dbReference>
<dbReference type="PDB" id="3QHT">
    <property type="method" value="X-ray"/>
    <property type="resolution" value="2.40 A"/>
    <property type="chains" value="A/B=2-98"/>
</dbReference>
<dbReference type="PDB" id="3TIX">
    <property type="method" value="X-ray"/>
    <property type="resolution" value="2.90 A"/>
    <property type="chains" value="A/C=1-98"/>
</dbReference>
<dbReference type="PDB" id="3UF8">
    <property type="method" value="X-ray"/>
    <property type="resolution" value="1.50 A"/>
    <property type="chains" value="A=13-98"/>
</dbReference>
<dbReference type="PDB" id="3UQA">
    <property type="method" value="X-ray"/>
    <property type="resolution" value="1.55 A"/>
    <property type="chains" value="A=13-98"/>
</dbReference>
<dbReference type="PDB" id="3UQB">
    <property type="method" value="X-ray"/>
    <property type="resolution" value="1.90 A"/>
    <property type="chains" value="A=13-98"/>
</dbReference>
<dbReference type="PDB" id="3V60">
    <property type="method" value="X-ray"/>
    <property type="resolution" value="2.60 A"/>
    <property type="chains" value="A=20-98"/>
</dbReference>
<dbReference type="PDB" id="3V61">
    <property type="method" value="X-ray"/>
    <property type="resolution" value="2.80 A"/>
    <property type="chains" value="A=20-98"/>
</dbReference>
<dbReference type="PDB" id="3V62">
    <property type="method" value="X-ray"/>
    <property type="resolution" value="2.90 A"/>
    <property type="chains" value="A/D=20-98"/>
</dbReference>
<dbReference type="PDB" id="3VAW">
    <property type="method" value="X-ray"/>
    <property type="resolution" value="1.55 A"/>
    <property type="chains" value="A=13-98"/>
</dbReference>
<dbReference type="PDB" id="4FN2">
    <property type="method" value="X-ray"/>
    <property type="resolution" value="1.95 A"/>
    <property type="chains" value="A/B=13-98"/>
</dbReference>
<dbReference type="PDB" id="4G50">
    <property type="method" value="X-ray"/>
    <property type="resolution" value="1.75 A"/>
    <property type="chains" value="A/B=13-98"/>
</dbReference>
<dbReference type="PDB" id="4GGQ">
    <property type="method" value="X-ray"/>
    <property type="resolution" value="1.95 A"/>
    <property type="chains" value="A/B/C/D=13-98"/>
</dbReference>
<dbReference type="PDB" id="4GIV">
    <property type="method" value="X-ray"/>
    <property type="resolution" value="2.45 A"/>
    <property type="chains" value="A/B=13-98"/>
</dbReference>
<dbReference type="PDB" id="5D6J">
    <property type="method" value="X-ray"/>
    <property type="resolution" value="2.25 A"/>
    <property type="chains" value="B=21-94"/>
</dbReference>
<dbReference type="PDB" id="5JNE">
    <property type="method" value="X-ray"/>
    <property type="resolution" value="2.85 A"/>
    <property type="chains" value="A/E=20-98, C/G=19-98"/>
</dbReference>
<dbReference type="PDB" id="5KLX">
    <property type="method" value="X-ray"/>
    <property type="resolution" value="2.45 A"/>
    <property type="chains" value="A/B/C/D=13-98"/>
</dbReference>
<dbReference type="PDB" id="5V8T">
    <property type="method" value="X-ray"/>
    <property type="resolution" value="2.10 A"/>
    <property type="chains" value="A/B=13-97"/>
</dbReference>
<dbReference type="PDB" id="5YC2">
    <property type="method" value="X-ray"/>
    <property type="resolution" value="2.70 A"/>
    <property type="chains" value="A/C=20-93"/>
</dbReference>
<dbReference type="PDB" id="5YCA">
    <property type="method" value="X-ray"/>
    <property type="resolution" value="1.57 A"/>
    <property type="chains" value="A=20-93"/>
</dbReference>
<dbReference type="PDB" id="6CFP">
    <property type="method" value="X-ray"/>
    <property type="resolution" value="2.45 A"/>
    <property type="chains" value="A=13-98"/>
</dbReference>
<dbReference type="PDB" id="6O49">
    <property type="method" value="X-ray"/>
    <property type="resolution" value="1.85 A"/>
    <property type="chains" value="A/B=13-98"/>
</dbReference>
<dbReference type="PDB" id="6O4A">
    <property type="method" value="X-ray"/>
    <property type="resolution" value="2.10 A"/>
    <property type="chains" value="A/B/C/D=13-98"/>
</dbReference>
<dbReference type="PDB" id="6P81">
    <property type="method" value="X-ray"/>
    <property type="resolution" value="1.75 A"/>
    <property type="chains" value="A=13-98"/>
</dbReference>
<dbReference type="PDB" id="6Q2S">
    <property type="method" value="EM"/>
    <property type="resolution" value="3.80 A"/>
    <property type="chains" value="A/B=1-98"/>
</dbReference>
<dbReference type="PDB" id="6RPQ">
    <property type="method" value="X-ray"/>
    <property type="resolution" value="2.65 A"/>
    <property type="chains" value="A=2-98"/>
</dbReference>
<dbReference type="PDB" id="6UKM">
    <property type="method" value="X-ray"/>
    <property type="resolution" value="1.74 A"/>
    <property type="chains" value="A=2-98"/>
</dbReference>
<dbReference type="PDB" id="6UKU">
    <property type="method" value="X-ray"/>
    <property type="resolution" value="1.68 A"/>
    <property type="chains" value="A=2-98"/>
</dbReference>
<dbReference type="PDB" id="6UKV">
    <property type="method" value="X-ray"/>
    <property type="resolution" value="1.83 A"/>
    <property type="chains" value="A/B=2-98"/>
</dbReference>
<dbReference type="PDB" id="6UKW">
    <property type="method" value="X-ray"/>
    <property type="resolution" value="1.97 A"/>
    <property type="chains" value="A/B=2-98"/>
</dbReference>
<dbReference type="PDB" id="6UKX">
    <property type="method" value="X-ray"/>
    <property type="resolution" value="1.93 A"/>
    <property type="chains" value="A/B=2-98"/>
</dbReference>
<dbReference type="PDB" id="6UKY">
    <property type="method" value="X-ray"/>
    <property type="resolution" value="1.95 A"/>
    <property type="chains" value="A=2-98"/>
</dbReference>
<dbReference type="PDB" id="6UKZ">
    <property type="method" value="X-ray"/>
    <property type="resolution" value="1.52 A"/>
    <property type="chains" value="A/B=2-98"/>
</dbReference>
<dbReference type="PDB" id="6UL0">
    <property type="method" value="X-ray"/>
    <property type="resolution" value="1.76 A"/>
    <property type="chains" value="A=2-98"/>
</dbReference>
<dbReference type="PDB" id="6VEL">
    <property type="method" value="X-ray"/>
    <property type="resolution" value="2.65 A"/>
    <property type="chains" value="C=1-98"/>
</dbReference>
<dbReference type="PDB" id="6VW2">
    <property type="method" value="EM"/>
    <property type="resolution" value="3.40 A"/>
    <property type="chains" value="A/B/C/D/E/F/G/H/I/J=1-97"/>
</dbReference>
<dbReference type="PDB" id="7LTO">
    <property type="method" value="EM"/>
    <property type="resolution" value="3.20 A"/>
    <property type="chains" value="B=1-98"/>
</dbReference>
<dbReference type="PDB" id="7O2W">
    <property type="method" value="EM"/>
    <property type="chains" value="A=2-96"/>
</dbReference>
<dbReference type="PDB" id="7P47">
    <property type="method" value="X-ray"/>
    <property type="resolution" value="3.31 A"/>
    <property type="chains" value="D/E=1-98"/>
</dbReference>
<dbReference type="PDB" id="7P7I">
    <property type="method" value="X-ray"/>
    <property type="resolution" value="1.70 A"/>
    <property type="chains" value="AAA/BBB=2-96"/>
</dbReference>
<dbReference type="PDB" id="7P7W">
    <property type="method" value="X-ray"/>
    <property type="resolution" value="1.57 A"/>
    <property type="chains" value="AAA/BBB=2-96"/>
</dbReference>
<dbReference type="PDB" id="7P9L">
    <property type="method" value="X-ray"/>
    <property type="resolution" value="1.75 A"/>
    <property type="chains" value="AAA/BBB=2-96"/>
</dbReference>
<dbReference type="PDB" id="7P9P">
    <property type="method" value="X-ray"/>
    <property type="resolution" value="2.11 A"/>
    <property type="chains" value="AAA/BBB=2-96"/>
</dbReference>
<dbReference type="PDB" id="7P9Y">
    <property type="method" value="X-ray"/>
    <property type="resolution" value="1.94 A"/>
    <property type="chains" value="AAA/BBB=2-96"/>
</dbReference>
<dbReference type="PDB" id="7PA1">
    <property type="method" value="X-ray"/>
    <property type="resolution" value="2.20 A"/>
    <property type="chains" value="AAA/BBB=2-96"/>
</dbReference>
<dbReference type="PDB" id="7SDE">
    <property type="method" value="EM"/>
    <property type="resolution" value="3.20 A"/>
    <property type="chains" value="B=1-98"/>
</dbReference>
<dbReference type="PDB" id="7ZHS">
    <property type="method" value="EM"/>
    <property type="resolution" value="6.90 A"/>
    <property type="chains" value="A/B/C/D/E/F/G/H/I/J/K/L/M/N/O/P/Q/R/S/T/U/V/W/X/Y/Z/a/b/c/d=3-98"/>
</dbReference>
<dbReference type="PDB" id="7ZWL">
    <property type="method" value="X-ray"/>
    <property type="resolution" value="2.00 A"/>
    <property type="chains" value="C=2-98"/>
</dbReference>
<dbReference type="PDB" id="8B7F">
    <property type="method" value="X-ray"/>
    <property type="resolution" value="4.60 A"/>
    <property type="chains" value="A/B=2-98"/>
</dbReference>
<dbReference type="PDB" id="8DMB">
    <property type="method" value="EM"/>
    <property type="resolution" value="3.10 A"/>
    <property type="chains" value="P=1-98"/>
</dbReference>
<dbReference type="PDB" id="8R1F">
    <property type="method" value="EM"/>
    <property type="resolution" value="3.67 A"/>
    <property type="chains" value="B=1-98"/>
</dbReference>
<dbReference type="PDB" id="8R1G">
    <property type="method" value="EM"/>
    <property type="resolution" value="3.99 A"/>
    <property type="chains" value="B/E=1-98"/>
</dbReference>
<dbReference type="PDB" id="8UZH">
    <property type="method" value="X-ray"/>
    <property type="resolution" value="2.80 A"/>
    <property type="chains" value="A/B=2-98"/>
</dbReference>
<dbReference type="PDB" id="8X7V">
    <property type="method" value="EM"/>
    <property type="resolution" value="3.01 A"/>
    <property type="chains" value="C=1-98"/>
</dbReference>
<dbReference type="PDB" id="8X7W">
    <property type="method" value="EM"/>
    <property type="resolution" value="3.36 A"/>
    <property type="chains" value="C/F=1-98"/>
</dbReference>
<dbReference type="PDB" id="9HDO">
    <property type="method" value="EM"/>
    <property type="resolution" value="2.30 A"/>
    <property type="chains" value="A=2-98"/>
</dbReference>
<dbReference type="PDB" id="9HDP">
    <property type="method" value="EM"/>
    <property type="resolution" value="2.50 A"/>
    <property type="chains" value="A=2-98"/>
</dbReference>
<dbReference type="PDB" id="9HDQ">
    <property type="method" value="EM"/>
    <property type="resolution" value="2.45 A"/>
    <property type="chains" value="A=2-98"/>
</dbReference>
<dbReference type="PDB" id="9HDR">
    <property type="method" value="EM"/>
    <property type="resolution" value="3.10 A"/>
    <property type="chains" value="A=2-98"/>
</dbReference>
<dbReference type="PDB" id="9IIS">
    <property type="method" value="X-ray"/>
    <property type="resolution" value="2.36 A"/>
    <property type="chains" value="A=1-98"/>
</dbReference>
<dbReference type="PDBsum" id="1EUV"/>
<dbReference type="PDBsum" id="1L2N"/>
<dbReference type="PDBsum" id="2EKE"/>
<dbReference type="PDBsum" id="3PGE"/>
<dbReference type="PDBsum" id="3QHT"/>
<dbReference type="PDBsum" id="3TIX"/>
<dbReference type="PDBsum" id="3UF8"/>
<dbReference type="PDBsum" id="3UQA"/>
<dbReference type="PDBsum" id="3UQB"/>
<dbReference type="PDBsum" id="3V60"/>
<dbReference type="PDBsum" id="3V61"/>
<dbReference type="PDBsum" id="3V62"/>
<dbReference type="PDBsum" id="3VAW"/>
<dbReference type="PDBsum" id="4FN2"/>
<dbReference type="PDBsum" id="4G50"/>
<dbReference type="PDBsum" id="4GGQ"/>
<dbReference type="PDBsum" id="4GIV"/>
<dbReference type="PDBsum" id="5D6J"/>
<dbReference type="PDBsum" id="5JNE"/>
<dbReference type="PDBsum" id="5KLX"/>
<dbReference type="PDBsum" id="5V8T"/>
<dbReference type="PDBsum" id="5YC2"/>
<dbReference type="PDBsum" id="5YCA"/>
<dbReference type="PDBsum" id="6CFP"/>
<dbReference type="PDBsum" id="6O49"/>
<dbReference type="PDBsum" id="6O4A"/>
<dbReference type="PDBsum" id="6P81"/>
<dbReference type="PDBsum" id="6Q2S"/>
<dbReference type="PDBsum" id="6RPQ"/>
<dbReference type="PDBsum" id="6UKM"/>
<dbReference type="PDBsum" id="6UKU"/>
<dbReference type="PDBsum" id="6UKV"/>
<dbReference type="PDBsum" id="6UKW"/>
<dbReference type="PDBsum" id="6UKX"/>
<dbReference type="PDBsum" id="6UKY"/>
<dbReference type="PDBsum" id="6UKZ"/>
<dbReference type="PDBsum" id="6UL0"/>
<dbReference type="PDBsum" id="6VEL"/>
<dbReference type="PDBsum" id="6VW2"/>
<dbReference type="PDBsum" id="7LTO"/>
<dbReference type="PDBsum" id="7O2W"/>
<dbReference type="PDBsum" id="7P47"/>
<dbReference type="PDBsum" id="7P7I"/>
<dbReference type="PDBsum" id="7P7W"/>
<dbReference type="PDBsum" id="7P9L"/>
<dbReference type="PDBsum" id="7P9P"/>
<dbReference type="PDBsum" id="7P9Y"/>
<dbReference type="PDBsum" id="7PA1"/>
<dbReference type="PDBsum" id="7SDE"/>
<dbReference type="PDBsum" id="7ZHS"/>
<dbReference type="PDBsum" id="7ZWL"/>
<dbReference type="PDBsum" id="8B7F"/>
<dbReference type="PDBsum" id="8DMB"/>
<dbReference type="PDBsum" id="8R1F"/>
<dbReference type="PDBsum" id="8R1G"/>
<dbReference type="PDBsum" id="8UZH"/>
<dbReference type="PDBsum" id="8X7V"/>
<dbReference type="PDBsum" id="8X7W"/>
<dbReference type="PDBsum" id="9HDO"/>
<dbReference type="PDBsum" id="9HDP"/>
<dbReference type="PDBsum" id="9HDQ"/>
<dbReference type="PDBsum" id="9HDR"/>
<dbReference type="PDBsum" id="9IIS"/>
<dbReference type="EMDB" id="EMD-27533"/>
<dbReference type="SMR" id="Q12306"/>
<dbReference type="BioGRID" id="32561">
    <property type="interactions" value="724"/>
</dbReference>
<dbReference type="DIP" id="DIP-1364N"/>
<dbReference type="FunCoup" id="Q12306">
    <property type="interactions" value="1460"/>
</dbReference>
<dbReference type="IntAct" id="Q12306">
    <property type="interactions" value="82"/>
</dbReference>
<dbReference type="MINT" id="Q12306"/>
<dbReference type="STRING" id="4932.YDR510W"/>
<dbReference type="iPTMnet" id="Q12306"/>
<dbReference type="PaxDb" id="4932-YDR510W"/>
<dbReference type="PeptideAtlas" id="Q12306"/>
<dbReference type="ABCD" id="Q12306">
    <property type="antibodies" value="19 sequenced antibodies"/>
</dbReference>
<dbReference type="EnsemblFungi" id="YDR510W_mRNA">
    <property type="protein sequence ID" value="YDR510W"/>
    <property type="gene ID" value="YDR510W"/>
</dbReference>
<dbReference type="GeneID" id="852122"/>
<dbReference type="KEGG" id="sce:YDR510W"/>
<dbReference type="AGR" id="SGD:S000002918"/>
<dbReference type="SGD" id="S000002918">
    <property type="gene designation" value="SMT3"/>
</dbReference>
<dbReference type="VEuPathDB" id="FungiDB:YDR510W"/>
<dbReference type="eggNOG" id="KOG1769">
    <property type="taxonomic scope" value="Eukaryota"/>
</dbReference>
<dbReference type="HOGENOM" id="CLU_148322_0_1_1"/>
<dbReference type="InParanoid" id="Q12306"/>
<dbReference type="OMA" id="MKIYCAR"/>
<dbReference type="OrthoDB" id="442921at2759"/>
<dbReference type="BioCyc" id="YEAST:G3O-30030-MONOMER"/>
<dbReference type="Reactome" id="R-SCE-3065676">
    <property type="pathway name" value="SUMO is conjugated to E1 (UBA2:SAE1)"/>
</dbReference>
<dbReference type="Reactome" id="R-SCE-3065678">
    <property type="pathway name" value="SUMO is transferred from E1 to E2 (UBE2I, UBC9)"/>
</dbReference>
<dbReference type="Reactome" id="R-SCE-3065679">
    <property type="pathway name" value="SUMO is proteolytically processed"/>
</dbReference>
<dbReference type="Reactome" id="R-SCE-3108214">
    <property type="pathway name" value="SUMOylation of DNA damage response and repair proteins"/>
</dbReference>
<dbReference type="Reactome" id="R-SCE-3232118">
    <property type="pathway name" value="SUMOylation of transcription factors"/>
</dbReference>
<dbReference type="Reactome" id="R-SCE-3899300">
    <property type="pathway name" value="SUMOylation of transcription cofactors"/>
</dbReference>
<dbReference type="Reactome" id="R-SCE-4085377">
    <property type="pathway name" value="SUMOylation of SUMOylation proteins"/>
</dbReference>
<dbReference type="Reactome" id="R-SCE-4551638">
    <property type="pathway name" value="SUMOylation of chromatin organization proteins"/>
</dbReference>
<dbReference type="Reactome" id="R-SCE-4570464">
    <property type="pathway name" value="SUMOylation of RNA binding proteins"/>
</dbReference>
<dbReference type="Reactome" id="R-SCE-4615885">
    <property type="pathway name" value="SUMOylation of DNA replication proteins"/>
</dbReference>
<dbReference type="Reactome" id="R-SCE-5693565">
    <property type="pathway name" value="Recruitment and ATM-mediated phosphorylation of repair and signaling proteins at DNA double strand breaks"/>
</dbReference>
<dbReference type="Reactome" id="R-SCE-9615933">
    <property type="pathway name" value="Postmitotic nuclear pore complex (NPC) reformation"/>
</dbReference>
<dbReference type="Reactome" id="R-SCE-9793242">
    <property type="pathway name" value="SUMOylation of nuclear envelope proteins"/>
</dbReference>
<dbReference type="Reactome" id="R-SCE-9856649">
    <property type="pathway name" value="Transcriptional and post-translational regulation of MITF-M expression and activity"/>
</dbReference>
<dbReference type="BioGRID-ORCS" id="852122">
    <property type="hits" value="0 hits in 10 CRISPR screens"/>
</dbReference>
<dbReference type="EvolutionaryTrace" id="Q12306"/>
<dbReference type="PRO" id="PR:Q12306"/>
<dbReference type="Proteomes" id="UP000002311">
    <property type="component" value="Chromosome IV"/>
</dbReference>
<dbReference type="RNAct" id="Q12306">
    <property type="molecule type" value="protein"/>
</dbReference>
<dbReference type="GO" id="GO:0000794">
    <property type="term" value="C:condensed nuclear chromosome"/>
    <property type="evidence" value="ECO:0000314"/>
    <property type="project" value="SGD"/>
</dbReference>
<dbReference type="GO" id="GO:0005634">
    <property type="term" value="C:nucleus"/>
    <property type="evidence" value="ECO:0000314"/>
    <property type="project" value="SGD"/>
</dbReference>
<dbReference type="GO" id="GO:0005940">
    <property type="term" value="C:septin ring"/>
    <property type="evidence" value="ECO:0000314"/>
    <property type="project" value="SGD"/>
</dbReference>
<dbReference type="GO" id="GO:0042802">
    <property type="term" value="F:identical protein binding"/>
    <property type="evidence" value="ECO:0000353"/>
    <property type="project" value="IntAct"/>
</dbReference>
<dbReference type="GO" id="GO:0031386">
    <property type="term" value="F:protein tag activity"/>
    <property type="evidence" value="ECO:0000314"/>
    <property type="project" value="SGD"/>
</dbReference>
<dbReference type="GO" id="GO:0044389">
    <property type="term" value="F:ubiquitin-like protein ligase binding"/>
    <property type="evidence" value="ECO:0000318"/>
    <property type="project" value="GO_Central"/>
</dbReference>
<dbReference type="GO" id="GO:0016925">
    <property type="term" value="P:protein sumoylation"/>
    <property type="evidence" value="ECO:0000314"/>
    <property type="project" value="SGD"/>
</dbReference>
<dbReference type="CDD" id="cd16116">
    <property type="entry name" value="Ubl_Smt3_like"/>
    <property type="match status" value="1"/>
</dbReference>
<dbReference type="DisProt" id="DP02264"/>
<dbReference type="FunFam" id="3.10.20.90:FF:000155">
    <property type="entry name" value="Ubiquitin-like protein SMT3"/>
    <property type="match status" value="1"/>
</dbReference>
<dbReference type="Gene3D" id="3.10.20.90">
    <property type="entry name" value="Phosphatidylinositol 3-kinase Catalytic Subunit, Chain A, domain 1"/>
    <property type="match status" value="1"/>
</dbReference>
<dbReference type="InterPro" id="IPR022617">
    <property type="entry name" value="Rad60/SUMO-like_dom"/>
</dbReference>
<dbReference type="InterPro" id="IPR000626">
    <property type="entry name" value="Ubiquitin-like_dom"/>
</dbReference>
<dbReference type="InterPro" id="IPR029071">
    <property type="entry name" value="Ubiquitin-like_domsf"/>
</dbReference>
<dbReference type="PANTHER" id="PTHR10562">
    <property type="entry name" value="SMALL UBIQUITIN-RELATED MODIFIER"/>
    <property type="match status" value="1"/>
</dbReference>
<dbReference type="Pfam" id="PF11976">
    <property type="entry name" value="Rad60-SLD"/>
    <property type="match status" value="1"/>
</dbReference>
<dbReference type="SMART" id="SM00213">
    <property type="entry name" value="UBQ"/>
    <property type="match status" value="1"/>
</dbReference>
<dbReference type="SUPFAM" id="SSF54236">
    <property type="entry name" value="Ubiquitin-like"/>
    <property type="match status" value="1"/>
</dbReference>
<dbReference type="PROSITE" id="PS50053">
    <property type="entry name" value="UBIQUITIN_2"/>
    <property type="match status" value="1"/>
</dbReference>
<proteinExistence type="evidence at protein level"/>
<evidence type="ECO:0000255" key="1">
    <source>
        <dbReference type="PROSITE-ProRule" id="PRU00214"/>
    </source>
</evidence>
<evidence type="ECO:0000269" key="2">
    <source>
    </source>
</evidence>
<evidence type="ECO:0000269" key="3">
    <source>
    </source>
</evidence>
<evidence type="ECO:0000305" key="4"/>
<evidence type="ECO:0007744" key="5">
    <source>
    </source>
</evidence>
<evidence type="ECO:0007744" key="6">
    <source>
    </source>
</evidence>
<evidence type="ECO:0007829" key="7">
    <source>
        <dbReference type="PDB" id="3UF8"/>
    </source>
</evidence>
<evidence type="ECO:0007829" key="8">
    <source>
        <dbReference type="PDB" id="3V60"/>
    </source>
</evidence>
<protein>
    <recommendedName>
        <fullName>Ubiquitin-like protein SMT3</fullName>
    </recommendedName>
</protein>
<name>SMT3_YEAST</name>